<comment type="function">
    <text evidence="1">Involved in the gluconeogenesis. Catalyzes stereospecifically the conversion of dihydroxyacetone phosphate (DHAP) to D-glyceraldehyde-3-phosphate (G3P).</text>
</comment>
<comment type="catalytic activity">
    <reaction evidence="1">
        <text>D-glyceraldehyde 3-phosphate = dihydroxyacetone phosphate</text>
        <dbReference type="Rhea" id="RHEA:18585"/>
        <dbReference type="ChEBI" id="CHEBI:57642"/>
        <dbReference type="ChEBI" id="CHEBI:59776"/>
        <dbReference type="EC" id="5.3.1.1"/>
    </reaction>
</comment>
<comment type="pathway">
    <text evidence="1">Carbohydrate biosynthesis; gluconeogenesis.</text>
</comment>
<comment type="pathway">
    <text evidence="1">Carbohydrate degradation; glycolysis; D-glyceraldehyde 3-phosphate from glycerone phosphate: step 1/1.</text>
</comment>
<comment type="subunit">
    <text evidence="1">Homodimer.</text>
</comment>
<comment type="subcellular location">
    <subcellularLocation>
        <location evidence="1">Cytoplasm</location>
    </subcellularLocation>
</comment>
<comment type="similarity">
    <text evidence="1">Belongs to the triosephosphate isomerase family.</text>
</comment>
<proteinExistence type="inferred from homology"/>
<protein>
    <recommendedName>
        <fullName evidence="1">Triosephosphate isomerase</fullName>
        <shortName evidence="1">TIM</shortName>
        <shortName evidence="1">TPI</shortName>
        <ecNumber evidence="1">5.3.1.1</ecNumber>
    </recommendedName>
    <alternativeName>
        <fullName evidence="1">Triose-phosphate isomerase</fullName>
    </alternativeName>
</protein>
<sequence length="267" mass="29143">MASKRIPLVAGNWKMNFDHLEATYFVQKLVWLLRDAHFDFKRCEVALFPSFTSLRSVQVLVEADKLHVAYGAQSVSVTTQGAFTGDVSADMIAHLGCSYVIVGHSERRKYHPEDDANIVDQVRAVLAAGMQPILCVGESFEERRQGIELDFAVGQVRDVTRDLNEEQAAKLIVAYEPVWAIGTGMVATPQSAQDAANAIRNDLKTTFGTKVSDSVRILYGGSVTSKNAAELISQPDVDGFLIGGAALDVEELAKIARLALKSTKSRN</sequence>
<feature type="chain" id="PRO_0000090182" description="Triosephosphate isomerase">
    <location>
        <begin position="1"/>
        <end position="267"/>
    </location>
</feature>
<feature type="active site" description="Electrophile" evidence="1">
    <location>
        <position position="104"/>
    </location>
</feature>
<feature type="active site" description="Proton acceptor" evidence="1">
    <location>
        <position position="176"/>
    </location>
</feature>
<feature type="binding site" evidence="1">
    <location>
        <begin position="12"/>
        <end position="14"/>
    </location>
    <ligand>
        <name>substrate</name>
    </ligand>
</feature>
<feature type="binding site" evidence="1">
    <location>
        <position position="182"/>
    </location>
    <ligand>
        <name>substrate</name>
    </ligand>
</feature>
<feature type="binding site" evidence="1">
    <location>
        <position position="222"/>
    </location>
    <ligand>
        <name>substrate</name>
    </ligand>
</feature>
<feature type="binding site" evidence="1">
    <location>
        <begin position="243"/>
        <end position="244"/>
    </location>
    <ligand>
        <name>substrate</name>
    </ligand>
</feature>
<gene>
    <name evidence="1" type="primary">tpiA</name>
    <name type="synonym">tpi</name>
    <name type="ordered locus">BL0708</name>
</gene>
<accession>Q8G6D5</accession>
<reference key="1">
    <citation type="journal article" date="2002" name="Proc. Natl. Acad. Sci. U.S.A.">
        <title>The genome sequence of Bifidobacterium longum reflects its adaptation to the human gastrointestinal tract.</title>
        <authorList>
            <person name="Schell M.A."/>
            <person name="Karmirantzou M."/>
            <person name="Snel B."/>
            <person name="Vilanova D."/>
            <person name="Berger B."/>
            <person name="Pessi G."/>
            <person name="Zwahlen M.-C."/>
            <person name="Desiere F."/>
            <person name="Bork P."/>
            <person name="Delley M."/>
            <person name="Pridmore R.D."/>
            <person name="Arigoni F."/>
        </authorList>
    </citation>
    <scope>NUCLEOTIDE SEQUENCE [LARGE SCALE GENOMIC DNA]</scope>
    <source>
        <strain>NCC 2705</strain>
    </source>
</reference>
<dbReference type="EC" id="5.3.1.1" evidence="1"/>
<dbReference type="EMBL" id="AE014295">
    <property type="protein sequence ID" value="AAN24527.1"/>
    <property type="molecule type" value="Genomic_DNA"/>
</dbReference>
<dbReference type="RefSeq" id="NP_695891.1">
    <property type="nucleotide sequence ID" value="NC_004307.2"/>
</dbReference>
<dbReference type="RefSeq" id="WP_007052784.1">
    <property type="nucleotide sequence ID" value="NC_004307.2"/>
</dbReference>
<dbReference type="SMR" id="Q8G6D5"/>
<dbReference type="STRING" id="206672.BL0708"/>
<dbReference type="EnsemblBacteria" id="AAN24527">
    <property type="protein sequence ID" value="AAN24527"/>
    <property type="gene ID" value="BL0708"/>
</dbReference>
<dbReference type="KEGG" id="blo:BL0708"/>
<dbReference type="PATRIC" id="fig|206672.9.peg.407"/>
<dbReference type="HOGENOM" id="CLU_024251_2_3_11"/>
<dbReference type="OrthoDB" id="9809429at2"/>
<dbReference type="PhylomeDB" id="Q8G6D5"/>
<dbReference type="UniPathway" id="UPA00109">
    <property type="reaction ID" value="UER00189"/>
</dbReference>
<dbReference type="UniPathway" id="UPA00138"/>
<dbReference type="Proteomes" id="UP000000439">
    <property type="component" value="Chromosome"/>
</dbReference>
<dbReference type="GO" id="GO:0005829">
    <property type="term" value="C:cytosol"/>
    <property type="evidence" value="ECO:0007669"/>
    <property type="project" value="TreeGrafter"/>
</dbReference>
<dbReference type="GO" id="GO:0004807">
    <property type="term" value="F:triose-phosphate isomerase activity"/>
    <property type="evidence" value="ECO:0007669"/>
    <property type="project" value="UniProtKB-UniRule"/>
</dbReference>
<dbReference type="GO" id="GO:0006094">
    <property type="term" value="P:gluconeogenesis"/>
    <property type="evidence" value="ECO:0007669"/>
    <property type="project" value="UniProtKB-UniRule"/>
</dbReference>
<dbReference type="GO" id="GO:0046166">
    <property type="term" value="P:glyceraldehyde-3-phosphate biosynthetic process"/>
    <property type="evidence" value="ECO:0007669"/>
    <property type="project" value="TreeGrafter"/>
</dbReference>
<dbReference type="GO" id="GO:0019563">
    <property type="term" value="P:glycerol catabolic process"/>
    <property type="evidence" value="ECO:0007669"/>
    <property type="project" value="TreeGrafter"/>
</dbReference>
<dbReference type="GO" id="GO:0006096">
    <property type="term" value="P:glycolytic process"/>
    <property type="evidence" value="ECO:0007669"/>
    <property type="project" value="UniProtKB-UniRule"/>
</dbReference>
<dbReference type="CDD" id="cd00311">
    <property type="entry name" value="TIM"/>
    <property type="match status" value="1"/>
</dbReference>
<dbReference type="FunFam" id="3.20.20.70:FF:000016">
    <property type="entry name" value="Triosephosphate isomerase"/>
    <property type="match status" value="1"/>
</dbReference>
<dbReference type="Gene3D" id="3.20.20.70">
    <property type="entry name" value="Aldolase class I"/>
    <property type="match status" value="1"/>
</dbReference>
<dbReference type="HAMAP" id="MF_00147_B">
    <property type="entry name" value="TIM_B"/>
    <property type="match status" value="1"/>
</dbReference>
<dbReference type="InterPro" id="IPR013785">
    <property type="entry name" value="Aldolase_TIM"/>
</dbReference>
<dbReference type="InterPro" id="IPR035990">
    <property type="entry name" value="TIM_sf"/>
</dbReference>
<dbReference type="InterPro" id="IPR022896">
    <property type="entry name" value="TrioseP_Isoase_bac/euk"/>
</dbReference>
<dbReference type="InterPro" id="IPR000652">
    <property type="entry name" value="Triosephosphate_isomerase"/>
</dbReference>
<dbReference type="InterPro" id="IPR020861">
    <property type="entry name" value="Triosephosphate_isomerase_AS"/>
</dbReference>
<dbReference type="NCBIfam" id="TIGR00419">
    <property type="entry name" value="tim"/>
    <property type="match status" value="1"/>
</dbReference>
<dbReference type="PANTHER" id="PTHR21139">
    <property type="entry name" value="TRIOSEPHOSPHATE ISOMERASE"/>
    <property type="match status" value="1"/>
</dbReference>
<dbReference type="PANTHER" id="PTHR21139:SF42">
    <property type="entry name" value="TRIOSEPHOSPHATE ISOMERASE"/>
    <property type="match status" value="1"/>
</dbReference>
<dbReference type="Pfam" id="PF00121">
    <property type="entry name" value="TIM"/>
    <property type="match status" value="1"/>
</dbReference>
<dbReference type="SUPFAM" id="SSF51351">
    <property type="entry name" value="Triosephosphate isomerase (TIM)"/>
    <property type="match status" value="1"/>
</dbReference>
<dbReference type="PROSITE" id="PS00171">
    <property type="entry name" value="TIM_1"/>
    <property type="match status" value="1"/>
</dbReference>
<dbReference type="PROSITE" id="PS51440">
    <property type="entry name" value="TIM_2"/>
    <property type="match status" value="1"/>
</dbReference>
<keyword id="KW-0963">Cytoplasm</keyword>
<keyword id="KW-0312">Gluconeogenesis</keyword>
<keyword id="KW-0324">Glycolysis</keyword>
<keyword id="KW-0413">Isomerase</keyword>
<keyword id="KW-1185">Reference proteome</keyword>
<name>TPIS_BIFLO</name>
<organism>
    <name type="scientific">Bifidobacterium longum (strain NCC 2705)</name>
    <dbReference type="NCBI Taxonomy" id="206672"/>
    <lineage>
        <taxon>Bacteria</taxon>
        <taxon>Bacillati</taxon>
        <taxon>Actinomycetota</taxon>
        <taxon>Actinomycetes</taxon>
        <taxon>Bifidobacteriales</taxon>
        <taxon>Bifidobacteriaceae</taxon>
        <taxon>Bifidobacterium</taxon>
    </lineage>
</organism>
<evidence type="ECO:0000255" key="1">
    <source>
        <dbReference type="HAMAP-Rule" id="MF_00147"/>
    </source>
</evidence>